<proteinExistence type="inferred from homology"/>
<reference key="1">
    <citation type="journal article" date="2004" name="Nucleic Acids Res.">
        <title>Whole genome comparisons of serotype 4b and 1/2a strains of the food-borne pathogen Listeria monocytogenes reveal new insights into the core genome components of this species.</title>
        <authorList>
            <person name="Nelson K.E."/>
            <person name="Fouts D.E."/>
            <person name="Mongodin E.F."/>
            <person name="Ravel J."/>
            <person name="DeBoy R.T."/>
            <person name="Kolonay J.F."/>
            <person name="Rasko D.A."/>
            <person name="Angiuoli S.V."/>
            <person name="Gill S.R."/>
            <person name="Paulsen I.T."/>
            <person name="Peterson J.D."/>
            <person name="White O."/>
            <person name="Nelson W.C."/>
            <person name="Nierman W.C."/>
            <person name="Beanan M.J."/>
            <person name="Brinkac L.M."/>
            <person name="Daugherty S.C."/>
            <person name="Dodson R.J."/>
            <person name="Durkin A.S."/>
            <person name="Madupu R."/>
            <person name="Haft D.H."/>
            <person name="Selengut J."/>
            <person name="Van Aken S.E."/>
            <person name="Khouri H.M."/>
            <person name="Fedorova N."/>
            <person name="Forberger H.A."/>
            <person name="Tran B."/>
            <person name="Kathariou S."/>
            <person name="Wonderling L.D."/>
            <person name="Uhlich G.A."/>
            <person name="Bayles D.O."/>
            <person name="Luchansky J.B."/>
            <person name="Fraser C.M."/>
        </authorList>
    </citation>
    <scope>NUCLEOTIDE SEQUENCE [LARGE SCALE GENOMIC DNA]</scope>
    <source>
        <strain>F2365</strain>
    </source>
</reference>
<gene>
    <name evidence="1" type="primary">ung1</name>
    <name type="ordered locus">LMOf2365_0402</name>
</gene>
<evidence type="ECO:0000255" key="1">
    <source>
        <dbReference type="HAMAP-Rule" id="MF_00148"/>
    </source>
</evidence>
<feature type="chain" id="PRO_0000176111" description="Uracil-DNA glycosylase 1">
    <location>
        <begin position="1"/>
        <end position="221"/>
    </location>
</feature>
<feature type="active site" description="Proton acceptor" evidence="1">
    <location>
        <position position="61"/>
    </location>
</feature>
<accession>Q723S4</accession>
<sequence>MVKTWEEFLKQEAKQPYFIELMEAVKDARAKGNVYPTEEDMFSCFRLCPYDQVKVVILGQDPYHGPGQAHGLSFSVQKGVRIPPSLRNIYKELKTDLDIEPADHGYLAKWAEQGVLLMNTSWSVEEGKAGSHKKLGWATFTDHVLEELNNYDKPLVFILWGNHAIKAASGITNPQHLLIKGVHPSPLAASRGFFESKPFSKTNAFLEEHGRKPIDWDLNEQ</sequence>
<dbReference type="EC" id="3.2.2.27" evidence="1"/>
<dbReference type="EMBL" id="AE017262">
    <property type="protein sequence ID" value="AAT03187.1"/>
    <property type="molecule type" value="Genomic_DNA"/>
</dbReference>
<dbReference type="RefSeq" id="WP_003724314.1">
    <property type="nucleotide sequence ID" value="NC_002973.6"/>
</dbReference>
<dbReference type="SMR" id="Q723S4"/>
<dbReference type="KEGG" id="lmf:LMOf2365_0402"/>
<dbReference type="HOGENOM" id="CLU_032162_3_1_9"/>
<dbReference type="GO" id="GO:0005737">
    <property type="term" value="C:cytoplasm"/>
    <property type="evidence" value="ECO:0007669"/>
    <property type="project" value="UniProtKB-SubCell"/>
</dbReference>
<dbReference type="GO" id="GO:0004844">
    <property type="term" value="F:uracil DNA N-glycosylase activity"/>
    <property type="evidence" value="ECO:0007669"/>
    <property type="project" value="UniProtKB-UniRule"/>
</dbReference>
<dbReference type="GO" id="GO:0097510">
    <property type="term" value="P:base-excision repair, AP site formation via deaminated base removal"/>
    <property type="evidence" value="ECO:0007669"/>
    <property type="project" value="TreeGrafter"/>
</dbReference>
<dbReference type="CDD" id="cd10027">
    <property type="entry name" value="UDG-F1-like"/>
    <property type="match status" value="1"/>
</dbReference>
<dbReference type="FunFam" id="3.40.470.10:FF:000001">
    <property type="entry name" value="Uracil-DNA glycosylase"/>
    <property type="match status" value="1"/>
</dbReference>
<dbReference type="Gene3D" id="3.40.470.10">
    <property type="entry name" value="Uracil-DNA glycosylase-like domain"/>
    <property type="match status" value="1"/>
</dbReference>
<dbReference type="HAMAP" id="MF_00148">
    <property type="entry name" value="UDG"/>
    <property type="match status" value="1"/>
</dbReference>
<dbReference type="InterPro" id="IPR002043">
    <property type="entry name" value="UDG_fam1"/>
</dbReference>
<dbReference type="InterPro" id="IPR018085">
    <property type="entry name" value="Ura-DNA_Glyclase_AS"/>
</dbReference>
<dbReference type="InterPro" id="IPR005122">
    <property type="entry name" value="Uracil-DNA_glycosylase-like"/>
</dbReference>
<dbReference type="InterPro" id="IPR036895">
    <property type="entry name" value="Uracil-DNA_glycosylase-like_sf"/>
</dbReference>
<dbReference type="NCBIfam" id="NF003588">
    <property type="entry name" value="PRK05254.1-1"/>
    <property type="match status" value="1"/>
</dbReference>
<dbReference type="NCBIfam" id="NF003589">
    <property type="entry name" value="PRK05254.1-2"/>
    <property type="match status" value="1"/>
</dbReference>
<dbReference type="NCBIfam" id="NF003592">
    <property type="entry name" value="PRK05254.1-5"/>
    <property type="match status" value="1"/>
</dbReference>
<dbReference type="NCBIfam" id="TIGR00628">
    <property type="entry name" value="ung"/>
    <property type="match status" value="1"/>
</dbReference>
<dbReference type="PANTHER" id="PTHR11264">
    <property type="entry name" value="URACIL-DNA GLYCOSYLASE"/>
    <property type="match status" value="1"/>
</dbReference>
<dbReference type="PANTHER" id="PTHR11264:SF0">
    <property type="entry name" value="URACIL-DNA GLYCOSYLASE"/>
    <property type="match status" value="1"/>
</dbReference>
<dbReference type="Pfam" id="PF03167">
    <property type="entry name" value="UDG"/>
    <property type="match status" value="1"/>
</dbReference>
<dbReference type="SMART" id="SM00986">
    <property type="entry name" value="UDG"/>
    <property type="match status" value="1"/>
</dbReference>
<dbReference type="SMART" id="SM00987">
    <property type="entry name" value="UreE_C"/>
    <property type="match status" value="1"/>
</dbReference>
<dbReference type="SUPFAM" id="SSF52141">
    <property type="entry name" value="Uracil-DNA glycosylase-like"/>
    <property type="match status" value="1"/>
</dbReference>
<dbReference type="PROSITE" id="PS00130">
    <property type="entry name" value="U_DNA_GLYCOSYLASE"/>
    <property type="match status" value="1"/>
</dbReference>
<keyword id="KW-0963">Cytoplasm</keyword>
<keyword id="KW-0227">DNA damage</keyword>
<keyword id="KW-0234">DNA repair</keyword>
<keyword id="KW-0378">Hydrolase</keyword>
<name>UNG1_LISMF</name>
<comment type="function">
    <text evidence="1">Excises uracil residues from the DNA which can arise as a result of misincorporation of dUMP residues by DNA polymerase or due to deamination of cytosine.</text>
</comment>
<comment type="catalytic activity">
    <reaction evidence="1">
        <text>Hydrolyzes single-stranded DNA or mismatched double-stranded DNA and polynucleotides, releasing free uracil.</text>
        <dbReference type="EC" id="3.2.2.27"/>
    </reaction>
</comment>
<comment type="subcellular location">
    <subcellularLocation>
        <location evidence="1">Cytoplasm</location>
    </subcellularLocation>
</comment>
<comment type="similarity">
    <text evidence="1">Belongs to the uracil-DNA glycosylase (UDG) superfamily. UNG family.</text>
</comment>
<organism>
    <name type="scientific">Listeria monocytogenes serotype 4b (strain F2365)</name>
    <dbReference type="NCBI Taxonomy" id="265669"/>
    <lineage>
        <taxon>Bacteria</taxon>
        <taxon>Bacillati</taxon>
        <taxon>Bacillota</taxon>
        <taxon>Bacilli</taxon>
        <taxon>Bacillales</taxon>
        <taxon>Listeriaceae</taxon>
        <taxon>Listeria</taxon>
    </lineage>
</organism>
<protein>
    <recommendedName>
        <fullName evidence="1">Uracil-DNA glycosylase 1</fullName>
        <shortName evidence="1">UDG 1</shortName>
        <ecNumber evidence="1">3.2.2.27</ecNumber>
    </recommendedName>
</protein>